<keyword id="KW-0539">Nucleus</keyword>
<keyword id="KW-1185">Reference proteome</keyword>
<keyword id="KW-0833">Ubl conjugation pathway</keyword>
<evidence type="ECO:0000250" key="1"/>
<evidence type="ECO:0000255" key="2">
    <source>
        <dbReference type="PROSITE-ProRule" id="PRU00080"/>
    </source>
</evidence>
<evidence type="ECO:0000269" key="3">
    <source>
    </source>
</evidence>
<evidence type="ECO:0000305" key="4"/>
<reference key="1">
    <citation type="journal article" date="1999" name="Nature">
        <title>Sequence and analysis of chromosome 4 of the plant Arabidopsis thaliana.</title>
        <authorList>
            <person name="Mayer K.F.X."/>
            <person name="Schueller C."/>
            <person name="Wambutt R."/>
            <person name="Murphy G."/>
            <person name="Volckaert G."/>
            <person name="Pohl T."/>
            <person name="Duesterhoeft A."/>
            <person name="Stiekema W."/>
            <person name="Entian K.-D."/>
            <person name="Terryn N."/>
            <person name="Harris B."/>
            <person name="Ansorge W."/>
            <person name="Brandt P."/>
            <person name="Grivell L.A."/>
            <person name="Rieger M."/>
            <person name="Weichselgartner M."/>
            <person name="de Simone V."/>
            <person name="Obermaier B."/>
            <person name="Mache R."/>
            <person name="Mueller M."/>
            <person name="Kreis M."/>
            <person name="Delseny M."/>
            <person name="Puigdomenech P."/>
            <person name="Watson M."/>
            <person name="Schmidtheini T."/>
            <person name="Reichert B."/>
            <person name="Portetelle D."/>
            <person name="Perez-Alonso M."/>
            <person name="Boutry M."/>
            <person name="Bancroft I."/>
            <person name="Vos P."/>
            <person name="Hoheisel J."/>
            <person name="Zimmermann W."/>
            <person name="Wedler H."/>
            <person name="Ridley P."/>
            <person name="Langham S.-A."/>
            <person name="McCullagh B."/>
            <person name="Bilham L."/>
            <person name="Robben J."/>
            <person name="van der Schueren J."/>
            <person name="Grymonprez B."/>
            <person name="Chuang Y.-J."/>
            <person name="Vandenbussche F."/>
            <person name="Braeken M."/>
            <person name="Weltjens I."/>
            <person name="Voet M."/>
            <person name="Bastiaens I."/>
            <person name="Aert R."/>
            <person name="Defoor E."/>
            <person name="Weitzenegger T."/>
            <person name="Bothe G."/>
            <person name="Ramsperger U."/>
            <person name="Hilbert H."/>
            <person name="Braun M."/>
            <person name="Holzer E."/>
            <person name="Brandt A."/>
            <person name="Peters S."/>
            <person name="van Staveren M."/>
            <person name="Dirkse W."/>
            <person name="Mooijman P."/>
            <person name="Klein Lankhorst R."/>
            <person name="Rose M."/>
            <person name="Hauf J."/>
            <person name="Koetter P."/>
            <person name="Berneiser S."/>
            <person name="Hempel S."/>
            <person name="Feldpausch M."/>
            <person name="Lamberth S."/>
            <person name="Van den Daele H."/>
            <person name="De Keyser A."/>
            <person name="Buysshaert C."/>
            <person name="Gielen J."/>
            <person name="Villarroel R."/>
            <person name="De Clercq R."/>
            <person name="van Montagu M."/>
            <person name="Rogers J."/>
            <person name="Cronin A."/>
            <person name="Quail M.A."/>
            <person name="Bray-Allen S."/>
            <person name="Clark L."/>
            <person name="Doggett J."/>
            <person name="Hall S."/>
            <person name="Kay M."/>
            <person name="Lennard N."/>
            <person name="McLay K."/>
            <person name="Mayes R."/>
            <person name="Pettett A."/>
            <person name="Rajandream M.A."/>
            <person name="Lyne M."/>
            <person name="Benes V."/>
            <person name="Rechmann S."/>
            <person name="Borkova D."/>
            <person name="Bloecker H."/>
            <person name="Scharfe M."/>
            <person name="Grimm M."/>
            <person name="Loehnert T.-H."/>
            <person name="Dose S."/>
            <person name="de Haan M."/>
            <person name="Maarse A.C."/>
            <person name="Schaefer M."/>
            <person name="Mueller-Auer S."/>
            <person name="Gabel C."/>
            <person name="Fuchs M."/>
            <person name="Fartmann B."/>
            <person name="Granderath K."/>
            <person name="Dauner D."/>
            <person name="Herzl A."/>
            <person name="Neumann S."/>
            <person name="Argiriou A."/>
            <person name="Vitale D."/>
            <person name="Liguori R."/>
            <person name="Piravandi E."/>
            <person name="Massenet O."/>
            <person name="Quigley F."/>
            <person name="Clabauld G."/>
            <person name="Muendlein A."/>
            <person name="Felber R."/>
            <person name="Schnabl S."/>
            <person name="Hiller R."/>
            <person name="Schmidt W."/>
            <person name="Lecharny A."/>
            <person name="Aubourg S."/>
            <person name="Chefdor F."/>
            <person name="Cooke R."/>
            <person name="Berger C."/>
            <person name="Monfort A."/>
            <person name="Casacuberta E."/>
            <person name="Gibbons T."/>
            <person name="Weber N."/>
            <person name="Vandenbol M."/>
            <person name="Bargues M."/>
            <person name="Terol J."/>
            <person name="Torres A."/>
            <person name="Perez-Perez A."/>
            <person name="Purnelle B."/>
            <person name="Bent E."/>
            <person name="Johnson S."/>
            <person name="Tacon D."/>
            <person name="Jesse T."/>
            <person name="Heijnen L."/>
            <person name="Schwarz S."/>
            <person name="Scholler P."/>
            <person name="Heber S."/>
            <person name="Francs P."/>
            <person name="Bielke C."/>
            <person name="Frishman D."/>
            <person name="Haase D."/>
            <person name="Lemcke K."/>
            <person name="Mewes H.-W."/>
            <person name="Stocker S."/>
            <person name="Zaccaria P."/>
            <person name="Bevan M."/>
            <person name="Wilson R.K."/>
            <person name="de la Bastide M."/>
            <person name="Habermann K."/>
            <person name="Parnell L."/>
            <person name="Dedhia N."/>
            <person name="Gnoj L."/>
            <person name="Schutz K."/>
            <person name="Huang E."/>
            <person name="Spiegel L."/>
            <person name="Sekhon M."/>
            <person name="Murray J."/>
            <person name="Sheet P."/>
            <person name="Cordes M."/>
            <person name="Abu-Threideh J."/>
            <person name="Stoneking T."/>
            <person name="Kalicki J."/>
            <person name="Graves T."/>
            <person name="Harmon G."/>
            <person name="Edwards J."/>
            <person name="Latreille P."/>
            <person name="Courtney L."/>
            <person name="Cloud J."/>
            <person name="Abbott A."/>
            <person name="Scott K."/>
            <person name="Johnson D."/>
            <person name="Minx P."/>
            <person name="Bentley D."/>
            <person name="Fulton B."/>
            <person name="Miller N."/>
            <person name="Greco T."/>
            <person name="Kemp K."/>
            <person name="Kramer J."/>
            <person name="Fulton L."/>
            <person name="Mardis E."/>
            <person name="Dante M."/>
            <person name="Pepin K."/>
            <person name="Hillier L.W."/>
            <person name="Nelson J."/>
            <person name="Spieth J."/>
            <person name="Ryan E."/>
            <person name="Andrews S."/>
            <person name="Geisel C."/>
            <person name="Layman D."/>
            <person name="Du H."/>
            <person name="Ali J."/>
            <person name="Berghoff A."/>
            <person name="Jones K."/>
            <person name="Drone K."/>
            <person name="Cotton M."/>
            <person name="Joshu C."/>
            <person name="Antonoiu B."/>
            <person name="Zidanic M."/>
            <person name="Strong C."/>
            <person name="Sun H."/>
            <person name="Lamar B."/>
            <person name="Yordan C."/>
            <person name="Ma P."/>
            <person name="Zhong J."/>
            <person name="Preston R."/>
            <person name="Vil D."/>
            <person name="Shekher M."/>
            <person name="Matero A."/>
            <person name="Shah R."/>
            <person name="Swaby I.K."/>
            <person name="O'Shaughnessy A."/>
            <person name="Rodriguez M."/>
            <person name="Hoffman J."/>
            <person name="Till S."/>
            <person name="Granat S."/>
            <person name="Shohdy N."/>
            <person name="Hasegawa A."/>
            <person name="Hameed A."/>
            <person name="Lodhi M."/>
            <person name="Johnson A."/>
            <person name="Chen E."/>
            <person name="Marra M.A."/>
            <person name="Martienssen R."/>
            <person name="McCombie W.R."/>
        </authorList>
    </citation>
    <scope>NUCLEOTIDE SEQUENCE [LARGE SCALE GENOMIC DNA]</scope>
    <source>
        <strain>cv. Columbia</strain>
    </source>
</reference>
<reference key="2">
    <citation type="journal article" date="2017" name="Plant J.">
        <title>Araport11: a complete reannotation of the Arabidopsis thaliana reference genome.</title>
        <authorList>
            <person name="Cheng C.Y."/>
            <person name="Krishnakumar V."/>
            <person name="Chan A.P."/>
            <person name="Thibaud-Nissen F."/>
            <person name="Schobel S."/>
            <person name="Town C.D."/>
        </authorList>
    </citation>
    <scope>GENOME REANNOTATION</scope>
    <source>
        <strain>cv. Columbia</strain>
    </source>
</reference>
<reference key="3">
    <citation type="submission" date="2006-11" db="EMBL/GenBank/DDBJ databases">
        <title>Arabidopsis ORF clones.</title>
        <authorList>
            <person name="Bautista V.R."/>
            <person name="Kim C.J."/>
            <person name="Chen H."/>
            <person name="Quinitio C."/>
            <person name="Ecker J.R."/>
        </authorList>
    </citation>
    <scope>NUCLEOTIDE SEQUENCE [LARGE SCALE MRNA]</scope>
    <source>
        <strain>cv. Columbia</strain>
    </source>
</reference>
<reference key="4">
    <citation type="journal article" date="2003" name="Plant J.">
        <title>Protein interaction analysis of SCF ubiquitin E3 ligase subunits from Arabidopsis.</title>
        <authorList>
            <person name="Risseeuw E.P."/>
            <person name="Daskalchuk T.E."/>
            <person name="Banks T.W."/>
            <person name="Liu E."/>
            <person name="Cotelesage J."/>
            <person name="Hellmann H."/>
            <person name="Estelle M."/>
            <person name="Somers D.E."/>
            <person name="Crosby W.L."/>
        </authorList>
    </citation>
    <scope>INTERACTION WITH SKP1A/ASK1 AND SPK1B/ASK2</scope>
</reference>
<dbReference type="EMBL" id="AL022603">
    <property type="protein sequence ID" value="CAA18715.1"/>
    <property type="status" value="ALT_INIT"/>
    <property type="molecule type" value="Genomic_DNA"/>
</dbReference>
<dbReference type="EMBL" id="AL161555">
    <property type="protein sequence ID" value="CAB81258.1"/>
    <property type="status" value="ALT_INIT"/>
    <property type="molecule type" value="Genomic_DNA"/>
</dbReference>
<dbReference type="EMBL" id="CP002687">
    <property type="protein sequence ID" value="AEE84461.1"/>
    <property type="molecule type" value="Genomic_DNA"/>
</dbReference>
<dbReference type="EMBL" id="BT029383">
    <property type="protein sequence ID" value="ABK32197.1"/>
    <property type="molecule type" value="mRNA"/>
</dbReference>
<dbReference type="PIR" id="T05159">
    <property type="entry name" value="T05159"/>
</dbReference>
<dbReference type="BioGRID" id="13525">
    <property type="interactions" value="2"/>
</dbReference>
<dbReference type="IntAct" id="O65416">
    <property type="interactions" value="2"/>
</dbReference>
<dbReference type="STRING" id="3702.O65416"/>
<dbReference type="PaxDb" id="3702-AT4G21510.1"/>
<dbReference type="EnsemblPlants" id="AT4G21510.1">
    <property type="protein sequence ID" value="AT4G21510.1"/>
    <property type="gene ID" value="AT4G21510"/>
</dbReference>
<dbReference type="GeneID" id="828236"/>
<dbReference type="Gramene" id="AT4G21510.1">
    <property type="protein sequence ID" value="AT4G21510.1"/>
    <property type="gene ID" value="AT4G21510"/>
</dbReference>
<dbReference type="KEGG" id="ath:AT4G21510"/>
<dbReference type="Araport" id="AT4G21510"/>
<dbReference type="TAIR" id="AT4G21510">
    <property type="gene designation" value="FBS2"/>
</dbReference>
<dbReference type="eggNOG" id="ENOG502S1WN">
    <property type="taxonomic scope" value="Eukaryota"/>
</dbReference>
<dbReference type="HOGENOM" id="CLU_113872_0_0_1"/>
<dbReference type="InParanoid" id="O65416"/>
<dbReference type="OMA" id="DAMEPPN"/>
<dbReference type="PhylomeDB" id="O65416"/>
<dbReference type="UniPathway" id="UPA00143"/>
<dbReference type="PRO" id="PR:O65416"/>
<dbReference type="Proteomes" id="UP000006548">
    <property type="component" value="Chromosome 4"/>
</dbReference>
<dbReference type="ExpressionAtlas" id="O65416">
    <property type="expression patterns" value="baseline and differential"/>
</dbReference>
<dbReference type="GO" id="GO:0005634">
    <property type="term" value="C:nucleus"/>
    <property type="evidence" value="ECO:0007669"/>
    <property type="project" value="UniProtKB-SubCell"/>
</dbReference>
<dbReference type="GO" id="GO:0016567">
    <property type="term" value="P:protein ubiquitination"/>
    <property type="evidence" value="ECO:0007669"/>
    <property type="project" value="UniProtKB-UniPathway"/>
</dbReference>
<dbReference type="InterPro" id="IPR036047">
    <property type="entry name" value="F-box-like_dom_sf"/>
</dbReference>
<dbReference type="InterPro" id="IPR001810">
    <property type="entry name" value="F-box_dom"/>
</dbReference>
<dbReference type="InterPro" id="IPR045286">
    <property type="entry name" value="FBS1-like"/>
</dbReference>
<dbReference type="PANTHER" id="PTHR34049">
    <property type="entry name" value="F-BOX PROTEIN SKIP27"/>
    <property type="match status" value="1"/>
</dbReference>
<dbReference type="PANTHER" id="PTHR34049:SF1">
    <property type="entry name" value="F-BOX PROTEIN SKIP27"/>
    <property type="match status" value="1"/>
</dbReference>
<dbReference type="Pfam" id="PF00646">
    <property type="entry name" value="F-box"/>
    <property type="match status" value="1"/>
</dbReference>
<dbReference type="SUPFAM" id="SSF81383">
    <property type="entry name" value="F-box domain"/>
    <property type="match status" value="1"/>
</dbReference>
<dbReference type="PROSITE" id="PS50181">
    <property type="entry name" value="FBOX"/>
    <property type="match status" value="1"/>
</dbReference>
<proteinExistence type="evidence at protein level"/>
<comment type="function">
    <text evidence="1">Component of SCF(ASK-cullin-F-box) E3 ubiquitin ligase complexes, which may mediate the ubiquitination and subsequent proteasomal degradation of target proteins.</text>
</comment>
<comment type="pathway">
    <text>Protein modification; protein ubiquitination.</text>
</comment>
<comment type="subunit">
    <text evidence="1 3">Part of a SCF (ASK-cullin-F-box) protein ligase complex (By similarity). Interacts with SKP1A/ASK1 and SPK1B/ASK2.</text>
</comment>
<comment type="subcellular location">
    <subcellularLocation>
        <location evidence="1">Nucleus</location>
    </subcellularLocation>
</comment>
<comment type="domain">
    <text evidence="1">The F-box is necessary for the interaction with ASK proteins.</text>
</comment>
<comment type="sequence caution" evidence="4">
    <conflict type="erroneous initiation">
        <sequence resource="EMBL-CDS" id="CAA18715"/>
    </conflict>
</comment>
<comment type="sequence caution" evidence="4">
    <conflict type="erroneous initiation">
        <sequence resource="EMBL-CDS" id="CAB81258"/>
    </conflict>
</comment>
<sequence>MIHYLHFIGEFCFSSAVKVVEWFSENLFLKRSTMALSKRGFVMTSNARFHGEEEELELGLGSVRFTRGLGRKRILISSCVRESLSRSAVEIPVVSESPPVKSSLKRQRSRITIVSSSSSEKSRLECLPQDLLIRVICGVDHEDLKSLKLVSKSIREASLVAKTLHFAYTTPKKTRAFRNSIDLEEVSDSRHQEDDIEPPNAPRHYRWTKAKRKEQLSSVSAALFT</sequence>
<protein>
    <recommendedName>
        <fullName>F-box protein SKIP27</fullName>
    </recommendedName>
    <alternativeName>
        <fullName>SKP1-interacting partner 27</fullName>
    </alternativeName>
</protein>
<gene>
    <name type="primary">SKIP27</name>
    <name type="ordered locus">At4g21510</name>
    <name type="ORF">F18E5.130</name>
</gene>
<name>SKI27_ARATH</name>
<accession>O65416</accession>
<accession>A0JQ13</accession>
<feature type="chain" id="PRO_0000283507" description="F-box protein SKIP27">
    <location>
        <begin position="1"/>
        <end position="225"/>
    </location>
</feature>
<feature type="domain" description="F-box" evidence="2">
    <location>
        <begin position="121"/>
        <end position="169"/>
    </location>
</feature>
<organism>
    <name type="scientific">Arabidopsis thaliana</name>
    <name type="common">Mouse-ear cress</name>
    <dbReference type="NCBI Taxonomy" id="3702"/>
    <lineage>
        <taxon>Eukaryota</taxon>
        <taxon>Viridiplantae</taxon>
        <taxon>Streptophyta</taxon>
        <taxon>Embryophyta</taxon>
        <taxon>Tracheophyta</taxon>
        <taxon>Spermatophyta</taxon>
        <taxon>Magnoliopsida</taxon>
        <taxon>eudicotyledons</taxon>
        <taxon>Gunneridae</taxon>
        <taxon>Pentapetalae</taxon>
        <taxon>rosids</taxon>
        <taxon>malvids</taxon>
        <taxon>Brassicales</taxon>
        <taxon>Brassicaceae</taxon>
        <taxon>Camelineae</taxon>
        <taxon>Arabidopsis</taxon>
    </lineage>
</organism>